<accession>Q5B7U0</accession>
<accession>C8VHN2</accession>
<accession>Q1HFT5</accession>
<name>PMEA_EMENI</name>
<keyword id="KW-0063">Aspartyl esterase</keyword>
<keyword id="KW-0961">Cell wall biogenesis/degradation</keyword>
<keyword id="KW-0325">Glycoprotein</keyword>
<keyword id="KW-0378">Hydrolase</keyword>
<keyword id="KW-1185">Reference proteome</keyword>
<keyword id="KW-0964">Secreted</keyword>
<keyword id="KW-0732">Signal</keyword>
<comment type="function">
    <text evidence="4">Involved in maceration and soft-rotting of plant tissue. Active against citrus pectin.</text>
</comment>
<comment type="catalytic activity">
    <reaction evidence="4">
        <text>[(1-&gt;4)-alpha-D-galacturonosyl methyl ester](n) + n H2O = [(1-&gt;4)-alpha-D-galacturonosyl](n) + n methanol + n H(+)</text>
        <dbReference type="Rhea" id="RHEA:22380"/>
        <dbReference type="Rhea" id="RHEA-COMP:14570"/>
        <dbReference type="Rhea" id="RHEA-COMP:14573"/>
        <dbReference type="ChEBI" id="CHEBI:15377"/>
        <dbReference type="ChEBI" id="CHEBI:15378"/>
        <dbReference type="ChEBI" id="CHEBI:17790"/>
        <dbReference type="ChEBI" id="CHEBI:140522"/>
        <dbReference type="ChEBI" id="CHEBI:140523"/>
        <dbReference type="EC" id="3.1.1.11"/>
    </reaction>
</comment>
<comment type="biophysicochemical properties">
    <phDependence>
        <text evidence="4">Optimum pH is 8.0.</text>
    </phDependence>
    <temperatureDependence>
        <text evidence="4">Optimum temperature is 30 degrees Celsius.</text>
    </temperatureDependence>
</comment>
<comment type="pathway">
    <text>Glycan metabolism; pectin degradation; 2-dehydro-3-deoxy-D-gluconate from pectin: step 1/5.</text>
</comment>
<comment type="subcellular location">
    <subcellularLocation>
        <location evidence="1">Secreted</location>
    </subcellularLocation>
</comment>
<comment type="similarity">
    <text evidence="5">Belongs to the pectinesterase family.</text>
</comment>
<reference key="1">
    <citation type="journal article" date="2006" name="Proc. Natl. Acad. Sci. U.S.A.">
        <title>Development and application of a suite of polysaccharide-degrading enzymes for analyzing plant cell walls.</title>
        <authorList>
            <person name="Bauer S."/>
            <person name="Vasu P."/>
            <person name="Persson S."/>
            <person name="Mort A.J."/>
            <person name="Somerville C.R."/>
        </authorList>
    </citation>
    <scope>NUCLEOTIDE SEQUENCE [MRNA]</scope>
    <scope>FUNCTION</scope>
    <scope>BIOPHYSICOCHEMICAL PROPERTIES</scope>
    <scope>CATALYTIC ACTIVITY</scope>
    <source>
        <strain>FGSC A4 / ATCC 38163 / CBS 112.46 / NRRL 194 / M139</strain>
    </source>
</reference>
<reference key="2">
    <citation type="journal article" date="2005" name="Nature">
        <title>Sequencing of Aspergillus nidulans and comparative analysis with A. fumigatus and A. oryzae.</title>
        <authorList>
            <person name="Galagan J.E."/>
            <person name="Calvo S.E."/>
            <person name="Cuomo C."/>
            <person name="Ma L.-J."/>
            <person name="Wortman J.R."/>
            <person name="Batzoglou S."/>
            <person name="Lee S.-I."/>
            <person name="Bastuerkmen M."/>
            <person name="Spevak C.C."/>
            <person name="Clutterbuck J."/>
            <person name="Kapitonov V."/>
            <person name="Jurka J."/>
            <person name="Scazzocchio C."/>
            <person name="Farman M.L."/>
            <person name="Butler J."/>
            <person name="Purcell S."/>
            <person name="Harris S."/>
            <person name="Braus G.H."/>
            <person name="Draht O."/>
            <person name="Busch S."/>
            <person name="D'Enfert C."/>
            <person name="Bouchier C."/>
            <person name="Goldman G.H."/>
            <person name="Bell-Pedersen D."/>
            <person name="Griffiths-Jones S."/>
            <person name="Doonan J.H."/>
            <person name="Yu J."/>
            <person name="Vienken K."/>
            <person name="Pain A."/>
            <person name="Freitag M."/>
            <person name="Selker E.U."/>
            <person name="Archer D.B."/>
            <person name="Penalva M.A."/>
            <person name="Oakley B.R."/>
            <person name="Momany M."/>
            <person name="Tanaka T."/>
            <person name="Kumagai T."/>
            <person name="Asai K."/>
            <person name="Machida M."/>
            <person name="Nierman W.C."/>
            <person name="Denning D.W."/>
            <person name="Caddick M.X."/>
            <person name="Hynes M."/>
            <person name="Paoletti M."/>
            <person name="Fischer R."/>
            <person name="Miller B.L."/>
            <person name="Dyer P.S."/>
            <person name="Sachs M.S."/>
            <person name="Osmani S.A."/>
            <person name="Birren B.W."/>
        </authorList>
    </citation>
    <scope>NUCLEOTIDE SEQUENCE [LARGE SCALE GENOMIC DNA]</scope>
    <source>
        <strain>FGSC A4 / ATCC 38163 / CBS 112.46 / NRRL 194 / M139</strain>
    </source>
</reference>
<reference key="3">
    <citation type="journal article" date="2009" name="Fungal Genet. Biol.">
        <title>The 2008 update of the Aspergillus nidulans genome annotation: a community effort.</title>
        <authorList>
            <person name="Wortman J.R."/>
            <person name="Gilsenan J.M."/>
            <person name="Joardar V."/>
            <person name="Deegan J."/>
            <person name="Clutterbuck J."/>
            <person name="Andersen M.R."/>
            <person name="Archer D."/>
            <person name="Bencina M."/>
            <person name="Braus G."/>
            <person name="Coutinho P."/>
            <person name="von Dohren H."/>
            <person name="Doonan J."/>
            <person name="Driessen A.J."/>
            <person name="Durek P."/>
            <person name="Espeso E."/>
            <person name="Fekete E."/>
            <person name="Flipphi M."/>
            <person name="Estrada C.G."/>
            <person name="Geysens S."/>
            <person name="Goldman G."/>
            <person name="de Groot P.W."/>
            <person name="Hansen K."/>
            <person name="Harris S.D."/>
            <person name="Heinekamp T."/>
            <person name="Helmstaedt K."/>
            <person name="Henrissat B."/>
            <person name="Hofmann G."/>
            <person name="Homan T."/>
            <person name="Horio T."/>
            <person name="Horiuchi H."/>
            <person name="James S."/>
            <person name="Jones M."/>
            <person name="Karaffa L."/>
            <person name="Karanyi Z."/>
            <person name="Kato M."/>
            <person name="Keller N."/>
            <person name="Kelly D.E."/>
            <person name="Kiel J.A."/>
            <person name="Kim J.M."/>
            <person name="van der Klei I.J."/>
            <person name="Klis F.M."/>
            <person name="Kovalchuk A."/>
            <person name="Krasevec N."/>
            <person name="Kubicek C.P."/>
            <person name="Liu B."/>
            <person name="Maccabe A."/>
            <person name="Meyer V."/>
            <person name="Mirabito P."/>
            <person name="Miskei M."/>
            <person name="Mos M."/>
            <person name="Mullins J."/>
            <person name="Nelson D.R."/>
            <person name="Nielsen J."/>
            <person name="Oakley B.R."/>
            <person name="Osmani S.A."/>
            <person name="Pakula T."/>
            <person name="Paszewski A."/>
            <person name="Paulsen I."/>
            <person name="Pilsyk S."/>
            <person name="Pocsi I."/>
            <person name="Punt P.J."/>
            <person name="Ram A.F."/>
            <person name="Ren Q."/>
            <person name="Robellet X."/>
            <person name="Robson G."/>
            <person name="Seiboth B."/>
            <person name="van Solingen P."/>
            <person name="Specht T."/>
            <person name="Sun J."/>
            <person name="Taheri-Talesh N."/>
            <person name="Takeshita N."/>
            <person name="Ussery D."/>
            <person name="vanKuyk P.A."/>
            <person name="Visser H."/>
            <person name="van de Vondervoort P.J."/>
            <person name="de Vries R.P."/>
            <person name="Walton J."/>
            <person name="Xiang X."/>
            <person name="Xiong Y."/>
            <person name="Zeng A.P."/>
            <person name="Brandt B.W."/>
            <person name="Cornell M.J."/>
            <person name="van den Hondel C.A."/>
            <person name="Visser J."/>
            <person name="Oliver S.G."/>
            <person name="Turner G."/>
        </authorList>
    </citation>
    <scope>GENOME REANNOTATION</scope>
    <source>
        <strain>FGSC A4 / ATCC 38163 / CBS 112.46 / NRRL 194 / M139</strain>
    </source>
</reference>
<dbReference type="EC" id="3.1.1.11" evidence="4"/>
<dbReference type="EMBL" id="DQ490489">
    <property type="protein sequence ID" value="ABF50865.1"/>
    <property type="molecule type" value="mRNA"/>
</dbReference>
<dbReference type="EMBL" id="AACD01000055">
    <property type="protein sequence ID" value="EAA63358.1"/>
    <property type="molecule type" value="Genomic_DNA"/>
</dbReference>
<dbReference type="EMBL" id="BN001306">
    <property type="protein sequence ID" value="CBF82804.1"/>
    <property type="molecule type" value="Genomic_DNA"/>
</dbReference>
<dbReference type="RefSeq" id="XP_660994.1">
    <property type="nucleotide sequence ID" value="XM_655902.1"/>
</dbReference>
<dbReference type="SMR" id="Q5B7U0"/>
<dbReference type="STRING" id="227321.Q5B7U0"/>
<dbReference type="GlyCosmos" id="Q5B7U0">
    <property type="glycosylation" value="1 site, No reported glycans"/>
</dbReference>
<dbReference type="EnsemblFungi" id="CBF82804">
    <property type="protein sequence ID" value="CBF82804"/>
    <property type="gene ID" value="ANIA_03390"/>
</dbReference>
<dbReference type="KEGG" id="ani:ANIA_03390"/>
<dbReference type="VEuPathDB" id="FungiDB:AN3390"/>
<dbReference type="eggNOG" id="ENOG502QT6U">
    <property type="taxonomic scope" value="Eukaryota"/>
</dbReference>
<dbReference type="HOGENOM" id="CLU_012243_1_2_1"/>
<dbReference type="InParanoid" id="Q5B7U0"/>
<dbReference type="OMA" id="CQFSGYQ"/>
<dbReference type="OrthoDB" id="2019149at2759"/>
<dbReference type="UniPathway" id="UPA00545">
    <property type="reaction ID" value="UER00823"/>
</dbReference>
<dbReference type="Proteomes" id="UP000000560">
    <property type="component" value="Chromosome VI"/>
</dbReference>
<dbReference type="GO" id="GO:0005576">
    <property type="term" value="C:extracellular region"/>
    <property type="evidence" value="ECO:0007669"/>
    <property type="project" value="UniProtKB-SubCell"/>
</dbReference>
<dbReference type="GO" id="GO:0030599">
    <property type="term" value="F:pectinesterase activity"/>
    <property type="evidence" value="ECO:0000314"/>
    <property type="project" value="UniProtKB"/>
</dbReference>
<dbReference type="GO" id="GO:0042545">
    <property type="term" value="P:cell wall modification"/>
    <property type="evidence" value="ECO:0007669"/>
    <property type="project" value="InterPro"/>
</dbReference>
<dbReference type="GO" id="GO:0045490">
    <property type="term" value="P:pectin catabolic process"/>
    <property type="evidence" value="ECO:0000314"/>
    <property type="project" value="UniProtKB"/>
</dbReference>
<dbReference type="FunFam" id="2.160.20.10:FF:000014">
    <property type="entry name" value="Pectinesterase"/>
    <property type="match status" value="1"/>
</dbReference>
<dbReference type="Gene3D" id="2.160.20.10">
    <property type="entry name" value="Single-stranded right-handed beta-helix, Pectin lyase-like"/>
    <property type="match status" value="1"/>
</dbReference>
<dbReference type="InterPro" id="IPR012334">
    <property type="entry name" value="Pectin_lyas_fold"/>
</dbReference>
<dbReference type="InterPro" id="IPR011050">
    <property type="entry name" value="Pectin_lyase_fold/virulence"/>
</dbReference>
<dbReference type="InterPro" id="IPR033131">
    <property type="entry name" value="Pectinesterase_Asp_AS"/>
</dbReference>
<dbReference type="InterPro" id="IPR000070">
    <property type="entry name" value="Pectinesterase_cat"/>
</dbReference>
<dbReference type="PANTHER" id="PTHR31321">
    <property type="entry name" value="ACYL-COA THIOESTER HYDROLASE YBHC-RELATED"/>
    <property type="match status" value="1"/>
</dbReference>
<dbReference type="PANTHER" id="PTHR31321:SF57">
    <property type="entry name" value="PECTINESTERASE 53-RELATED"/>
    <property type="match status" value="1"/>
</dbReference>
<dbReference type="Pfam" id="PF01095">
    <property type="entry name" value="Pectinesterase"/>
    <property type="match status" value="1"/>
</dbReference>
<dbReference type="SUPFAM" id="SSF51126">
    <property type="entry name" value="Pectin lyase-like"/>
    <property type="match status" value="1"/>
</dbReference>
<dbReference type="PROSITE" id="PS00503">
    <property type="entry name" value="PECTINESTERASE_2"/>
    <property type="match status" value="1"/>
</dbReference>
<evidence type="ECO:0000250" key="1"/>
<evidence type="ECO:0000255" key="2"/>
<evidence type="ECO:0000255" key="3">
    <source>
        <dbReference type="PROSITE-ProRule" id="PRU10040"/>
    </source>
</evidence>
<evidence type="ECO:0000269" key="4">
    <source>
    </source>
</evidence>
<evidence type="ECO:0000305" key="5"/>
<gene>
    <name type="primary">pmeA</name>
    <name type="ORF">AN3390</name>
</gene>
<sequence length="325" mass="34859">MRVQSYLSLFSLVGAALCAPREHFKRTARTSAPAGCLTVGGSGTYSTIGAAFAALGSSSSEACIYISAGTYKEQLTFQYAGPLTLYGETTDTSSYKKNTVTITHTISSPEAGSLVASATVNAAMDNFTMYNINVVNGYGKGAQAVALAASGERQGYYGCQFLGYQDTLYARVGVQYYSNCYIEGAVDYIFGDASAWFGECDIVSNGAGYITAMSRETASDPAWYCFDHCNIYGKSGLDLTGDVYLGRPWRVLARVIYQNSELSDIINAAGWTTMAEGATPLYYEIGNTGDGADTSKRLYLSEISAAVTKATVLGSDWTDWLDWSY</sequence>
<proteinExistence type="evidence at protein level"/>
<organism>
    <name type="scientific">Emericella nidulans (strain FGSC A4 / ATCC 38163 / CBS 112.46 / NRRL 194 / M139)</name>
    <name type="common">Aspergillus nidulans</name>
    <dbReference type="NCBI Taxonomy" id="227321"/>
    <lineage>
        <taxon>Eukaryota</taxon>
        <taxon>Fungi</taxon>
        <taxon>Dikarya</taxon>
        <taxon>Ascomycota</taxon>
        <taxon>Pezizomycotina</taxon>
        <taxon>Eurotiomycetes</taxon>
        <taxon>Eurotiomycetidae</taxon>
        <taxon>Eurotiales</taxon>
        <taxon>Aspergillaceae</taxon>
        <taxon>Aspergillus</taxon>
        <taxon>Aspergillus subgen. Nidulantes</taxon>
    </lineage>
</organism>
<feature type="signal peptide" evidence="2">
    <location>
        <begin position="1"/>
        <end position="18"/>
    </location>
</feature>
<feature type="chain" id="PRO_0000394083" description="Pectinesterase A">
    <location>
        <begin position="19"/>
        <end position="325"/>
    </location>
</feature>
<feature type="active site" description="Proton donor" evidence="3">
    <location>
        <position position="166"/>
    </location>
</feature>
<feature type="active site" description="Nucleophile" evidence="3">
    <location>
        <position position="187"/>
    </location>
</feature>
<feature type="binding site" evidence="1">
    <location>
        <position position="143"/>
    </location>
    <ligand>
        <name>substrate</name>
    </ligand>
</feature>
<feature type="binding site" evidence="1">
    <location>
        <position position="247"/>
    </location>
    <ligand>
        <name>substrate</name>
    </ligand>
</feature>
<feature type="binding site" evidence="1">
    <location>
        <position position="249"/>
    </location>
    <ligand>
        <name>substrate</name>
    </ligand>
</feature>
<feature type="site" description="Transition state stabilizer" evidence="1">
    <location>
        <position position="165"/>
    </location>
</feature>
<feature type="glycosylation site" description="N-linked (GlcNAc...) asparagine" evidence="2">
    <location>
        <position position="126"/>
    </location>
</feature>
<protein>
    <recommendedName>
        <fullName>Pectinesterase A</fullName>
        <ecNumber evidence="4">3.1.1.11</ecNumber>
    </recommendedName>
    <alternativeName>
        <fullName>Pectin methylesterase A</fullName>
    </alternativeName>
</protein>